<protein>
    <recommendedName>
        <fullName>Nucleolar protein 12</fullName>
    </recommendedName>
    <alternativeName>
        <fullName>Nucleolar protein of 25 kDa</fullName>
    </alternativeName>
</protein>
<reference key="1">
    <citation type="journal article" date="2006" name="Exp. Cell Res.">
        <title>Molecular cloning and characterization of Nop25, a novel nucleolar RNA binding protein, highly conserved in vertebrate species.</title>
        <authorList>
            <person name="Suzuki S."/>
            <person name="Kanno M."/>
            <person name="Fujiwara T."/>
            <person name="Sugiyama H."/>
            <person name="Yokoyama A."/>
            <person name="Takahashi H."/>
            <person name="Tanaka J."/>
        </authorList>
    </citation>
    <scope>NUCLEOTIDE SEQUENCE [MRNA]</scope>
    <scope>FUNCTION</scope>
    <scope>SUBCELLULAR LOCATION</scope>
    <scope>TISSUE SPECIFICITY</scope>
    <scope>DEVELOPMENTAL STAGE</scope>
    <source>
        <strain>BALB/cJ</strain>
    </source>
</reference>
<reference key="2">
    <citation type="journal article" date="2005" name="Science">
        <title>The transcriptional landscape of the mammalian genome.</title>
        <authorList>
            <person name="Carninci P."/>
            <person name="Kasukawa T."/>
            <person name="Katayama S."/>
            <person name="Gough J."/>
            <person name="Frith M.C."/>
            <person name="Maeda N."/>
            <person name="Oyama R."/>
            <person name="Ravasi T."/>
            <person name="Lenhard B."/>
            <person name="Wells C."/>
            <person name="Kodzius R."/>
            <person name="Shimokawa K."/>
            <person name="Bajic V.B."/>
            <person name="Brenner S.E."/>
            <person name="Batalov S."/>
            <person name="Forrest A.R."/>
            <person name="Zavolan M."/>
            <person name="Davis M.J."/>
            <person name="Wilming L.G."/>
            <person name="Aidinis V."/>
            <person name="Allen J.E."/>
            <person name="Ambesi-Impiombato A."/>
            <person name="Apweiler R."/>
            <person name="Aturaliya R.N."/>
            <person name="Bailey T.L."/>
            <person name="Bansal M."/>
            <person name="Baxter L."/>
            <person name="Beisel K.W."/>
            <person name="Bersano T."/>
            <person name="Bono H."/>
            <person name="Chalk A.M."/>
            <person name="Chiu K.P."/>
            <person name="Choudhary V."/>
            <person name="Christoffels A."/>
            <person name="Clutterbuck D.R."/>
            <person name="Crowe M.L."/>
            <person name="Dalla E."/>
            <person name="Dalrymple B.P."/>
            <person name="de Bono B."/>
            <person name="Della Gatta G."/>
            <person name="di Bernardo D."/>
            <person name="Down T."/>
            <person name="Engstrom P."/>
            <person name="Fagiolini M."/>
            <person name="Faulkner G."/>
            <person name="Fletcher C.F."/>
            <person name="Fukushima T."/>
            <person name="Furuno M."/>
            <person name="Futaki S."/>
            <person name="Gariboldi M."/>
            <person name="Georgii-Hemming P."/>
            <person name="Gingeras T.R."/>
            <person name="Gojobori T."/>
            <person name="Green R.E."/>
            <person name="Gustincich S."/>
            <person name="Harbers M."/>
            <person name="Hayashi Y."/>
            <person name="Hensch T.K."/>
            <person name="Hirokawa N."/>
            <person name="Hill D."/>
            <person name="Huminiecki L."/>
            <person name="Iacono M."/>
            <person name="Ikeo K."/>
            <person name="Iwama A."/>
            <person name="Ishikawa T."/>
            <person name="Jakt M."/>
            <person name="Kanapin A."/>
            <person name="Katoh M."/>
            <person name="Kawasawa Y."/>
            <person name="Kelso J."/>
            <person name="Kitamura H."/>
            <person name="Kitano H."/>
            <person name="Kollias G."/>
            <person name="Krishnan S.P."/>
            <person name="Kruger A."/>
            <person name="Kummerfeld S.K."/>
            <person name="Kurochkin I.V."/>
            <person name="Lareau L.F."/>
            <person name="Lazarevic D."/>
            <person name="Lipovich L."/>
            <person name="Liu J."/>
            <person name="Liuni S."/>
            <person name="McWilliam S."/>
            <person name="Madan Babu M."/>
            <person name="Madera M."/>
            <person name="Marchionni L."/>
            <person name="Matsuda H."/>
            <person name="Matsuzawa S."/>
            <person name="Miki H."/>
            <person name="Mignone F."/>
            <person name="Miyake S."/>
            <person name="Morris K."/>
            <person name="Mottagui-Tabar S."/>
            <person name="Mulder N."/>
            <person name="Nakano N."/>
            <person name="Nakauchi H."/>
            <person name="Ng P."/>
            <person name="Nilsson R."/>
            <person name="Nishiguchi S."/>
            <person name="Nishikawa S."/>
            <person name="Nori F."/>
            <person name="Ohara O."/>
            <person name="Okazaki Y."/>
            <person name="Orlando V."/>
            <person name="Pang K.C."/>
            <person name="Pavan W.J."/>
            <person name="Pavesi G."/>
            <person name="Pesole G."/>
            <person name="Petrovsky N."/>
            <person name="Piazza S."/>
            <person name="Reed J."/>
            <person name="Reid J.F."/>
            <person name="Ring B.Z."/>
            <person name="Ringwald M."/>
            <person name="Rost B."/>
            <person name="Ruan Y."/>
            <person name="Salzberg S.L."/>
            <person name="Sandelin A."/>
            <person name="Schneider C."/>
            <person name="Schoenbach C."/>
            <person name="Sekiguchi K."/>
            <person name="Semple C.A."/>
            <person name="Seno S."/>
            <person name="Sessa L."/>
            <person name="Sheng Y."/>
            <person name="Shibata Y."/>
            <person name="Shimada H."/>
            <person name="Shimada K."/>
            <person name="Silva D."/>
            <person name="Sinclair B."/>
            <person name="Sperling S."/>
            <person name="Stupka E."/>
            <person name="Sugiura K."/>
            <person name="Sultana R."/>
            <person name="Takenaka Y."/>
            <person name="Taki K."/>
            <person name="Tammoja K."/>
            <person name="Tan S.L."/>
            <person name="Tang S."/>
            <person name="Taylor M.S."/>
            <person name="Tegner J."/>
            <person name="Teichmann S.A."/>
            <person name="Ueda H.R."/>
            <person name="van Nimwegen E."/>
            <person name="Verardo R."/>
            <person name="Wei C.L."/>
            <person name="Yagi K."/>
            <person name="Yamanishi H."/>
            <person name="Zabarovsky E."/>
            <person name="Zhu S."/>
            <person name="Zimmer A."/>
            <person name="Hide W."/>
            <person name="Bult C."/>
            <person name="Grimmond S.M."/>
            <person name="Teasdale R.D."/>
            <person name="Liu E.T."/>
            <person name="Brusic V."/>
            <person name="Quackenbush J."/>
            <person name="Wahlestedt C."/>
            <person name="Mattick J.S."/>
            <person name="Hume D.A."/>
            <person name="Kai C."/>
            <person name="Sasaki D."/>
            <person name="Tomaru Y."/>
            <person name="Fukuda S."/>
            <person name="Kanamori-Katayama M."/>
            <person name="Suzuki M."/>
            <person name="Aoki J."/>
            <person name="Arakawa T."/>
            <person name="Iida J."/>
            <person name="Imamura K."/>
            <person name="Itoh M."/>
            <person name="Kato T."/>
            <person name="Kawaji H."/>
            <person name="Kawagashira N."/>
            <person name="Kawashima T."/>
            <person name="Kojima M."/>
            <person name="Kondo S."/>
            <person name="Konno H."/>
            <person name="Nakano K."/>
            <person name="Ninomiya N."/>
            <person name="Nishio T."/>
            <person name="Okada M."/>
            <person name="Plessy C."/>
            <person name="Shibata K."/>
            <person name="Shiraki T."/>
            <person name="Suzuki S."/>
            <person name="Tagami M."/>
            <person name="Waki K."/>
            <person name="Watahiki A."/>
            <person name="Okamura-Oho Y."/>
            <person name="Suzuki H."/>
            <person name="Kawai J."/>
            <person name="Hayashizaki Y."/>
        </authorList>
    </citation>
    <scope>NUCLEOTIDE SEQUENCE [LARGE SCALE MRNA]</scope>
    <source>
        <strain>C57BL/6J</strain>
        <tissue>Placenta</tissue>
        <tissue>Vagina</tissue>
    </source>
</reference>
<reference key="3">
    <citation type="journal article" date="2004" name="Genome Res.">
        <title>The status, quality, and expansion of the NIH full-length cDNA project: the Mammalian Gene Collection (MGC).</title>
        <authorList>
            <consortium name="The MGC Project Team"/>
        </authorList>
    </citation>
    <scope>NUCLEOTIDE SEQUENCE [LARGE SCALE MRNA]</scope>
    <source>
        <strain>C57BL/6J</strain>
        <strain>FVB/N</strain>
        <tissue>Brain</tissue>
        <tissue>Mammary tumor</tissue>
    </source>
</reference>
<reference key="4">
    <citation type="journal article" date="2010" name="Cell">
        <title>A tissue-specific atlas of mouse protein phosphorylation and expression.</title>
        <authorList>
            <person name="Huttlin E.L."/>
            <person name="Jedrychowski M.P."/>
            <person name="Elias J.E."/>
            <person name="Goswami T."/>
            <person name="Rad R."/>
            <person name="Beausoleil S.A."/>
            <person name="Villen J."/>
            <person name="Haas W."/>
            <person name="Sowa M.E."/>
            <person name="Gygi S.P."/>
        </authorList>
    </citation>
    <scope>IDENTIFICATION BY MASS SPECTROMETRY [LARGE SCALE ANALYSIS]</scope>
    <source>
        <tissue>Spleen</tissue>
    </source>
</reference>
<proteinExistence type="evidence at protein level"/>
<accession>Q8BG17</accession>
<accession>Q91VI1</accession>
<gene>
    <name type="primary">Nol12</name>
    <name type="synonym">Nop25</name>
</gene>
<dbReference type="EMBL" id="AY940114">
    <property type="protein sequence ID" value="AAX32893.1"/>
    <property type="molecule type" value="mRNA"/>
</dbReference>
<dbReference type="EMBL" id="AK037035">
    <property type="protein sequence ID" value="BAC29680.1"/>
    <property type="molecule type" value="mRNA"/>
</dbReference>
<dbReference type="EMBL" id="AK083539">
    <property type="protein sequence ID" value="BAC38946.1"/>
    <property type="molecule type" value="mRNA"/>
</dbReference>
<dbReference type="EMBL" id="AK167446">
    <property type="protein sequence ID" value="BAE39532.1"/>
    <property type="molecule type" value="mRNA"/>
</dbReference>
<dbReference type="EMBL" id="BC013701">
    <property type="protein sequence ID" value="AAH13701.1"/>
    <property type="molecule type" value="mRNA"/>
</dbReference>
<dbReference type="EMBL" id="BC094424">
    <property type="protein sequence ID" value="AAH94424.1"/>
    <property type="molecule type" value="mRNA"/>
</dbReference>
<dbReference type="CCDS" id="CCDS27629.1"/>
<dbReference type="RefSeq" id="NP_598561.2">
    <property type="nucleotide sequence ID" value="NM_133800.3"/>
</dbReference>
<dbReference type="SMR" id="Q8BG17"/>
<dbReference type="BioGRID" id="220934">
    <property type="interactions" value="1"/>
</dbReference>
<dbReference type="FunCoup" id="Q8BG17">
    <property type="interactions" value="2041"/>
</dbReference>
<dbReference type="IntAct" id="Q8BG17">
    <property type="interactions" value="1"/>
</dbReference>
<dbReference type="STRING" id="10090.ENSMUSP00000116103"/>
<dbReference type="iPTMnet" id="Q8BG17"/>
<dbReference type="PhosphoSitePlus" id="Q8BG17"/>
<dbReference type="PaxDb" id="10090-ENSMUSP00000116103"/>
<dbReference type="PeptideAtlas" id="Q8BG17"/>
<dbReference type="ProteomicsDB" id="252918"/>
<dbReference type="Pumba" id="Q8BG17"/>
<dbReference type="DNASU" id="97961"/>
<dbReference type="Ensembl" id="ENSMUST00000138880.9">
    <property type="protein sequence ID" value="ENSMUSP00000116103.2"/>
    <property type="gene ID" value="ENSMUSG00000033099.11"/>
</dbReference>
<dbReference type="GeneID" id="97961"/>
<dbReference type="KEGG" id="mmu:97961"/>
<dbReference type="UCSC" id="uc007wrw.1">
    <property type="organism name" value="mouse"/>
</dbReference>
<dbReference type="AGR" id="MGI:2146285"/>
<dbReference type="CTD" id="79159"/>
<dbReference type="MGI" id="MGI:2146285">
    <property type="gene designation" value="Nol12"/>
</dbReference>
<dbReference type="VEuPathDB" id="HostDB:ENSMUSG00000033099"/>
<dbReference type="eggNOG" id="KOG4709">
    <property type="taxonomic scope" value="Eukaryota"/>
</dbReference>
<dbReference type="GeneTree" id="ENSGT00390000015973"/>
<dbReference type="HOGENOM" id="CLU_111183_0_0_1"/>
<dbReference type="InParanoid" id="Q8BG17"/>
<dbReference type="OMA" id="LHMHSRK"/>
<dbReference type="OrthoDB" id="551633at2759"/>
<dbReference type="PhylomeDB" id="Q8BG17"/>
<dbReference type="TreeFam" id="TF323855"/>
<dbReference type="BioGRID-ORCS" id="97961">
    <property type="hits" value="17 hits in 77 CRISPR screens"/>
</dbReference>
<dbReference type="ChiTaRS" id="Nol12">
    <property type="organism name" value="mouse"/>
</dbReference>
<dbReference type="PRO" id="PR:Q8BG17"/>
<dbReference type="Proteomes" id="UP000000589">
    <property type="component" value="Chromosome 15"/>
</dbReference>
<dbReference type="RNAct" id="Q8BG17">
    <property type="molecule type" value="protein"/>
</dbReference>
<dbReference type="Bgee" id="ENSMUSG00000033099">
    <property type="expression patterns" value="Expressed in dorsal pancreas and 250 other cell types or tissues"/>
</dbReference>
<dbReference type="ExpressionAtlas" id="Q8BG17">
    <property type="expression patterns" value="baseline and differential"/>
</dbReference>
<dbReference type="GO" id="GO:0005737">
    <property type="term" value="C:cytoplasm"/>
    <property type="evidence" value="ECO:0007669"/>
    <property type="project" value="UniProtKB-SubCell"/>
</dbReference>
<dbReference type="GO" id="GO:0005730">
    <property type="term" value="C:nucleolus"/>
    <property type="evidence" value="ECO:0000314"/>
    <property type="project" value="MGI"/>
</dbReference>
<dbReference type="GO" id="GO:0042802">
    <property type="term" value="F:identical protein binding"/>
    <property type="evidence" value="ECO:0007669"/>
    <property type="project" value="Ensembl"/>
</dbReference>
<dbReference type="GO" id="GO:0019843">
    <property type="term" value="F:rRNA binding"/>
    <property type="evidence" value="ECO:0000266"/>
    <property type="project" value="MGI"/>
</dbReference>
<dbReference type="InterPro" id="IPR019186">
    <property type="entry name" value="Nucleolar_protein_12"/>
</dbReference>
<dbReference type="PANTHER" id="PTHR14577">
    <property type="entry name" value="NUCLEOLAR PROTEIN 12"/>
    <property type="match status" value="1"/>
</dbReference>
<dbReference type="PANTHER" id="PTHR14577:SF0">
    <property type="entry name" value="NUCLEOLAR PROTEIN 12"/>
    <property type="match status" value="1"/>
</dbReference>
<dbReference type="Pfam" id="PF09805">
    <property type="entry name" value="Nop25"/>
    <property type="match status" value="1"/>
</dbReference>
<organism>
    <name type="scientific">Mus musculus</name>
    <name type="common">Mouse</name>
    <dbReference type="NCBI Taxonomy" id="10090"/>
    <lineage>
        <taxon>Eukaryota</taxon>
        <taxon>Metazoa</taxon>
        <taxon>Chordata</taxon>
        <taxon>Craniata</taxon>
        <taxon>Vertebrata</taxon>
        <taxon>Euteleostomi</taxon>
        <taxon>Mammalia</taxon>
        <taxon>Eutheria</taxon>
        <taxon>Euarchontoglires</taxon>
        <taxon>Glires</taxon>
        <taxon>Rodentia</taxon>
        <taxon>Myomorpha</taxon>
        <taxon>Muroidea</taxon>
        <taxon>Muridae</taxon>
        <taxon>Murinae</taxon>
        <taxon>Mus</taxon>
        <taxon>Mus</taxon>
    </lineage>
</organism>
<name>NOL12_MOUSE</name>
<keyword id="KW-0175">Coiled coil</keyword>
<keyword id="KW-0963">Cytoplasm</keyword>
<keyword id="KW-0539">Nucleus</keyword>
<keyword id="KW-1185">Reference proteome</keyword>
<keyword id="KW-0694">RNA-binding</keyword>
<keyword id="KW-0699">rRNA-binding</keyword>
<sequence length="217" mass="25356">MGRNKKKKKRDGDDRRPRLVLNFDEEKRREYLTGFHKRKVERKKAAIEEIKQRLKQEQKKLREERHQEYLKMLAEREEALEEADELERLVTAKTESVQYDHPNHTVTVTTISDLDLSGARLLGLPLPEQGDQDGSQEEEMSSLEKPTKALPRKSKDPLLSQRISSLTATLHAHSRKKVKRKHPRRAQDSTKKPPSATRTSKTQRRRRMTGKARHNGE</sequence>
<evidence type="ECO:0000250" key="1"/>
<evidence type="ECO:0000250" key="2">
    <source>
        <dbReference type="UniProtKB" id="Q9UGY1"/>
    </source>
</evidence>
<evidence type="ECO:0000255" key="3"/>
<evidence type="ECO:0000256" key="4">
    <source>
        <dbReference type="SAM" id="MobiDB-lite"/>
    </source>
</evidence>
<evidence type="ECO:0000269" key="5">
    <source>
    </source>
</evidence>
<evidence type="ECO:0000305" key="6"/>
<feature type="chain" id="PRO_0000271208" description="Nucleolar protein 12">
    <location>
        <begin position="1"/>
        <end position="217"/>
    </location>
</feature>
<feature type="region of interest" description="Disordered" evidence="4">
    <location>
        <begin position="122"/>
        <end position="217"/>
    </location>
</feature>
<feature type="coiled-coil region" evidence="3">
    <location>
        <begin position="34"/>
        <end position="98"/>
    </location>
</feature>
<feature type="compositionally biased region" description="Acidic residues" evidence="4">
    <location>
        <begin position="130"/>
        <end position="141"/>
    </location>
</feature>
<feature type="compositionally biased region" description="Basic residues" evidence="4">
    <location>
        <begin position="172"/>
        <end position="184"/>
    </location>
</feature>
<feature type="compositionally biased region" description="Basic residues" evidence="4">
    <location>
        <begin position="201"/>
        <end position="217"/>
    </location>
</feature>
<feature type="sequence conflict" description="In Ref. 3; AAH13701." evidence="6" ref="3">
    <original>R</original>
    <variation>P</variation>
    <location>
        <position position="29"/>
    </location>
</feature>
<feature type="sequence conflict" description="In Ref. 3; AAH13701." evidence="6" ref="3">
    <original>A</original>
    <variation>V</variation>
    <location>
        <position position="92"/>
    </location>
</feature>
<comment type="function">
    <text evidence="2 5">Multifunctional RNA binding protein that plays a role in RNA metabolism and DNA maintenance. Participates in the resolution of DNA stress and the maintenance of genome integrity by localizing to sites of DNA insults. Also plays a role in proper nucleolar organization by limiting nucleolar size and regulating nucleolar number. Mechanistically, regulates the nucleolar levels of fibrillarin and nucleolin, two key players in pre-rRNA processing and ribosome assembly.</text>
</comment>
<comment type="subunit">
    <text evidence="1">Interacts with KIAA1191.</text>
</comment>
<comment type="subcellular location">
    <subcellularLocation>
        <location evidence="5">Nucleus</location>
        <location evidence="5">Nucleolus</location>
    </subcellularLocation>
    <subcellularLocation>
        <location evidence="2">Nucleus</location>
    </subcellularLocation>
    <subcellularLocation>
        <location evidence="2">Cytoplasm</location>
    </subcellularLocation>
</comment>
<comment type="tissue specificity">
    <text evidence="5">Expressed in brain, lung, spleen, kidney and heart.</text>
</comment>
<comment type="developmental stage">
    <text evidence="5">Continuously expressed during embryogenesis.</text>
</comment>
<comment type="similarity">
    <text evidence="6">Belongs to the RRP17 family.</text>
</comment>